<dbReference type="EC" id="3.5.4.19"/>
<dbReference type="EMBL" id="AE010300">
    <property type="protein sequence ID" value="AAN47750.1"/>
    <property type="molecule type" value="Genomic_DNA"/>
</dbReference>
<dbReference type="RefSeq" id="NP_710732.1">
    <property type="nucleotide sequence ID" value="NC_004342.2"/>
</dbReference>
<dbReference type="RefSeq" id="WP_000098501.1">
    <property type="nucleotide sequence ID" value="NC_004342.2"/>
</dbReference>
<dbReference type="SMR" id="Q8F8K4"/>
<dbReference type="STRING" id="189518.LA_0551"/>
<dbReference type="PaxDb" id="189518-LA_0551"/>
<dbReference type="EnsemblBacteria" id="AAN47750">
    <property type="protein sequence ID" value="AAN47750"/>
    <property type="gene ID" value="LA_0551"/>
</dbReference>
<dbReference type="KEGG" id="lil:LA_0551"/>
<dbReference type="PATRIC" id="fig|189518.3.peg.556"/>
<dbReference type="HOGENOM" id="CLU_1446017_0_0_12"/>
<dbReference type="InParanoid" id="Q8F8K4"/>
<dbReference type="OrthoDB" id="9795769at2"/>
<dbReference type="UniPathway" id="UPA00031">
    <property type="reaction ID" value="UER00008"/>
</dbReference>
<dbReference type="Proteomes" id="UP000001408">
    <property type="component" value="Chromosome I"/>
</dbReference>
<dbReference type="GO" id="GO:0005737">
    <property type="term" value="C:cytoplasm"/>
    <property type="evidence" value="ECO:0007669"/>
    <property type="project" value="UniProtKB-SubCell"/>
</dbReference>
<dbReference type="GO" id="GO:0004635">
    <property type="term" value="F:phosphoribosyl-AMP cyclohydrolase activity"/>
    <property type="evidence" value="ECO:0007669"/>
    <property type="project" value="UniProtKB-EC"/>
</dbReference>
<dbReference type="GO" id="GO:0000105">
    <property type="term" value="P:L-histidine biosynthetic process"/>
    <property type="evidence" value="ECO:0007669"/>
    <property type="project" value="UniProtKB-UniPathway"/>
</dbReference>
<dbReference type="Gene3D" id="3.10.20.810">
    <property type="entry name" value="Phosphoribosyl-AMP cyclohydrolase"/>
    <property type="match status" value="1"/>
</dbReference>
<dbReference type="InterPro" id="IPR002496">
    <property type="entry name" value="PRib_AMP_CycHydrolase_dom"/>
</dbReference>
<dbReference type="InterPro" id="IPR038019">
    <property type="entry name" value="PRib_AMP_CycHydrolase_sf"/>
</dbReference>
<dbReference type="PANTHER" id="PTHR42945">
    <property type="entry name" value="HISTIDINE BIOSYNTHESIS BIFUNCTIONAL PROTEIN"/>
    <property type="match status" value="1"/>
</dbReference>
<dbReference type="PANTHER" id="PTHR42945:SF1">
    <property type="entry name" value="HISTIDINE BIOSYNTHESIS BIFUNCTIONAL PROTEIN HIS7"/>
    <property type="match status" value="1"/>
</dbReference>
<dbReference type="Pfam" id="PF01502">
    <property type="entry name" value="PRA-CH"/>
    <property type="match status" value="1"/>
</dbReference>
<dbReference type="SUPFAM" id="SSF141734">
    <property type="entry name" value="HisI-like"/>
    <property type="match status" value="1"/>
</dbReference>
<organism>
    <name type="scientific">Leptospira interrogans serogroup Icterohaemorrhagiae serovar Lai (strain 56601)</name>
    <dbReference type="NCBI Taxonomy" id="189518"/>
    <lineage>
        <taxon>Bacteria</taxon>
        <taxon>Pseudomonadati</taxon>
        <taxon>Spirochaetota</taxon>
        <taxon>Spirochaetia</taxon>
        <taxon>Leptospirales</taxon>
        <taxon>Leptospiraceae</taxon>
        <taxon>Leptospira</taxon>
    </lineage>
</organism>
<gene>
    <name type="primary">hisI</name>
    <name type="ordered locus">LA_0551</name>
</gene>
<sequence>MSSREITILKIQEPTRSIASLTRIMEEELSQYRKTLPKGFREEVDCDEDTVLFLHVDFLPLDFQKTTELLLTGKKNLVPVVAIDLQGQILMQAFGNEESQTLSLKTGYAHYFSRSRNQLWKKGDTSGHTQKILQILSPTDRSFLVYQVEQEVAACHEGYYSCFFRERMEGVTWKLLPVPRNFLPEKS</sequence>
<keyword id="KW-0028">Amino-acid biosynthesis</keyword>
<keyword id="KW-0963">Cytoplasm</keyword>
<keyword id="KW-0368">Histidine biosynthesis</keyword>
<keyword id="KW-0378">Hydrolase</keyword>
<keyword id="KW-1185">Reference proteome</keyword>
<name>HIS3_LEPIN</name>
<proteinExistence type="inferred from homology"/>
<comment type="function">
    <text evidence="1">Catalyzes the hydrolysis of the adenine ring of phosphoribosyl-AMP.</text>
</comment>
<comment type="catalytic activity">
    <reaction>
        <text>1-(5-phospho-beta-D-ribosyl)-5'-AMP + H2O = 1-(5-phospho-beta-D-ribosyl)-5-[(5-phospho-beta-D-ribosylamino)methylideneamino]imidazole-4-carboxamide</text>
        <dbReference type="Rhea" id="RHEA:20049"/>
        <dbReference type="ChEBI" id="CHEBI:15377"/>
        <dbReference type="ChEBI" id="CHEBI:58435"/>
        <dbReference type="ChEBI" id="CHEBI:59457"/>
        <dbReference type="EC" id="3.5.4.19"/>
    </reaction>
</comment>
<comment type="pathway">
    <text>Amino-acid biosynthesis; L-histidine biosynthesis; L-histidine from 5-phospho-alpha-D-ribose 1-diphosphate: step 3/9.</text>
</comment>
<comment type="subunit">
    <text evidence="1">Homodimer.</text>
</comment>
<comment type="subcellular location">
    <subcellularLocation>
        <location evidence="1">Cytoplasm</location>
    </subcellularLocation>
</comment>
<comment type="similarity">
    <text evidence="2">Belongs to the PRA-CH family.</text>
</comment>
<protein>
    <recommendedName>
        <fullName>Phosphoribosyl-AMP cyclohydrolase</fullName>
        <shortName>PRA-CH</shortName>
        <ecNumber>3.5.4.19</ecNumber>
    </recommendedName>
</protein>
<accession>Q8F8K4</accession>
<reference key="1">
    <citation type="journal article" date="2003" name="Nature">
        <title>Unique physiological and pathogenic features of Leptospira interrogans revealed by whole-genome sequencing.</title>
        <authorList>
            <person name="Ren S.-X."/>
            <person name="Fu G."/>
            <person name="Jiang X.-G."/>
            <person name="Zeng R."/>
            <person name="Miao Y.-G."/>
            <person name="Xu H."/>
            <person name="Zhang Y.-X."/>
            <person name="Xiong H."/>
            <person name="Lu G."/>
            <person name="Lu L.-F."/>
            <person name="Jiang H.-Q."/>
            <person name="Jia J."/>
            <person name="Tu Y.-F."/>
            <person name="Jiang J.-X."/>
            <person name="Gu W.-Y."/>
            <person name="Zhang Y.-Q."/>
            <person name="Cai Z."/>
            <person name="Sheng H.-H."/>
            <person name="Yin H.-F."/>
            <person name="Zhang Y."/>
            <person name="Zhu G.-F."/>
            <person name="Wan M."/>
            <person name="Huang H.-L."/>
            <person name="Qian Z."/>
            <person name="Wang S.-Y."/>
            <person name="Ma W."/>
            <person name="Yao Z.-J."/>
            <person name="Shen Y."/>
            <person name="Qiang B.-Q."/>
            <person name="Xia Q.-C."/>
            <person name="Guo X.-K."/>
            <person name="Danchin A."/>
            <person name="Saint Girons I."/>
            <person name="Somerville R.L."/>
            <person name="Wen Y.-M."/>
            <person name="Shi M.-H."/>
            <person name="Chen Z."/>
            <person name="Xu J.-G."/>
            <person name="Zhao G.-P."/>
        </authorList>
    </citation>
    <scope>NUCLEOTIDE SEQUENCE [LARGE SCALE GENOMIC DNA]</scope>
    <source>
        <strain>56601</strain>
    </source>
</reference>
<feature type="chain" id="PRO_0000136480" description="Phosphoribosyl-AMP cyclohydrolase">
    <location>
        <begin position="1"/>
        <end position="187"/>
    </location>
</feature>
<evidence type="ECO:0000250" key="1"/>
<evidence type="ECO:0000305" key="2"/>